<evidence type="ECO:0000255" key="1">
    <source>
        <dbReference type="HAMAP-Rule" id="MF_03139"/>
    </source>
</evidence>
<sequence>MSLATLDTTEHPNLPTVSTTLFKAKAARKLSFEKIGEHIGRNEVAAAAIFYGQAKPSREDIEKLADLLHIPQQPLEEQLNGFPDRGRSVEMPPKEPLIYRLYEIVQNYGYAYKAVLNEKFGDGIMSAISFSTKVEKETDEDGNNWAVITLRGKWLPFSRF</sequence>
<name>CYNS_PENRW</name>
<keyword id="KW-0456">Lyase</keyword>
<keyword id="KW-1185">Reference proteome</keyword>
<gene>
    <name evidence="1" type="primary">cyn1</name>
    <name type="ORF">Pc21g18920</name>
</gene>
<comment type="function">
    <text evidence="1">Catalyzes the reaction of cyanate with bicarbonate to produce ammonia and carbon dioxide.</text>
</comment>
<comment type="catalytic activity">
    <reaction evidence="1">
        <text>cyanate + hydrogencarbonate + 3 H(+) = NH4(+) + 2 CO2</text>
        <dbReference type="Rhea" id="RHEA:11120"/>
        <dbReference type="ChEBI" id="CHEBI:15378"/>
        <dbReference type="ChEBI" id="CHEBI:16526"/>
        <dbReference type="ChEBI" id="CHEBI:17544"/>
        <dbReference type="ChEBI" id="CHEBI:28938"/>
        <dbReference type="ChEBI" id="CHEBI:29195"/>
        <dbReference type="EC" id="4.2.1.104"/>
    </reaction>
</comment>
<comment type="similarity">
    <text evidence="1">Belongs to the cyanase family.</text>
</comment>
<protein>
    <recommendedName>
        <fullName evidence="1">Cyanate hydratase</fullName>
        <shortName evidence="1">Cyanase</shortName>
        <ecNumber evidence="1">4.2.1.104</ecNumber>
    </recommendedName>
    <alternativeName>
        <fullName evidence="1">Cyanate hydrolase</fullName>
    </alternativeName>
    <alternativeName>
        <fullName evidence="1">Cyanate lyase</fullName>
    </alternativeName>
</protein>
<accession>B6HIM5</accession>
<dbReference type="EC" id="4.2.1.104" evidence="1"/>
<dbReference type="EMBL" id="AM920436">
    <property type="protein sequence ID" value="CAP96789.1"/>
    <property type="molecule type" value="Genomic_DNA"/>
</dbReference>
<dbReference type="RefSeq" id="XP_002568883.1">
    <property type="nucleotide sequence ID" value="XM_002568837.1"/>
</dbReference>
<dbReference type="SMR" id="B6HIM5"/>
<dbReference type="STRING" id="500485.B6HIM5"/>
<dbReference type="GeneID" id="8317219"/>
<dbReference type="KEGG" id="pcs:N7525_006650"/>
<dbReference type="VEuPathDB" id="FungiDB:PCH_Pc21g18920"/>
<dbReference type="eggNOG" id="ENOG502S3YJ">
    <property type="taxonomic scope" value="Eukaryota"/>
</dbReference>
<dbReference type="HOGENOM" id="CLU_103452_0_0_1"/>
<dbReference type="OMA" id="YELVMIN"/>
<dbReference type="OrthoDB" id="10019422at2759"/>
<dbReference type="BioCyc" id="PCHR:PC21G18920-MONOMER"/>
<dbReference type="Proteomes" id="UP000000724">
    <property type="component" value="Contig Pc00c21"/>
</dbReference>
<dbReference type="GO" id="GO:0008824">
    <property type="term" value="F:cyanate hydratase activity"/>
    <property type="evidence" value="ECO:0007669"/>
    <property type="project" value="UniProtKB-UniRule"/>
</dbReference>
<dbReference type="GO" id="GO:0003677">
    <property type="term" value="F:DNA binding"/>
    <property type="evidence" value="ECO:0007669"/>
    <property type="project" value="InterPro"/>
</dbReference>
<dbReference type="GO" id="GO:0009439">
    <property type="term" value="P:cyanate metabolic process"/>
    <property type="evidence" value="ECO:0007669"/>
    <property type="project" value="UniProtKB-UniRule"/>
</dbReference>
<dbReference type="CDD" id="cd00559">
    <property type="entry name" value="Cyanase_C"/>
    <property type="match status" value="1"/>
</dbReference>
<dbReference type="CDD" id="cd00093">
    <property type="entry name" value="HTH_XRE"/>
    <property type="match status" value="1"/>
</dbReference>
<dbReference type="Gene3D" id="3.30.1160.10">
    <property type="entry name" value="Cyanate lyase, C-terminal domain"/>
    <property type="match status" value="1"/>
</dbReference>
<dbReference type="Gene3D" id="1.10.260.40">
    <property type="entry name" value="lambda repressor-like DNA-binding domains"/>
    <property type="match status" value="1"/>
</dbReference>
<dbReference type="HAMAP" id="MF_00535">
    <property type="entry name" value="Cyanate_hydrat"/>
    <property type="match status" value="1"/>
</dbReference>
<dbReference type="InterPro" id="IPR001387">
    <property type="entry name" value="Cro/C1-type_HTH"/>
</dbReference>
<dbReference type="InterPro" id="IPR008076">
    <property type="entry name" value="Cyanase"/>
</dbReference>
<dbReference type="InterPro" id="IPR003712">
    <property type="entry name" value="Cyanate_lyase_C"/>
</dbReference>
<dbReference type="InterPro" id="IPR036581">
    <property type="entry name" value="Cyanate_lyase_C_sf"/>
</dbReference>
<dbReference type="InterPro" id="IPR010982">
    <property type="entry name" value="Lambda_DNA-bd_dom_sf"/>
</dbReference>
<dbReference type="NCBIfam" id="TIGR00673">
    <property type="entry name" value="cynS"/>
    <property type="match status" value="1"/>
</dbReference>
<dbReference type="PANTHER" id="PTHR34186">
    <property type="entry name" value="CYANATE HYDRATASE"/>
    <property type="match status" value="1"/>
</dbReference>
<dbReference type="PANTHER" id="PTHR34186:SF2">
    <property type="entry name" value="CYANATE HYDRATASE"/>
    <property type="match status" value="1"/>
</dbReference>
<dbReference type="Pfam" id="PF02560">
    <property type="entry name" value="Cyanate_lyase"/>
    <property type="match status" value="1"/>
</dbReference>
<dbReference type="PIRSF" id="PIRSF001263">
    <property type="entry name" value="Cyanate_hydratas"/>
    <property type="match status" value="1"/>
</dbReference>
<dbReference type="PRINTS" id="PR01693">
    <property type="entry name" value="CYANASE"/>
</dbReference>
<dbReference type="SMART" id="SM01116">
    <property type="entry name" value="Cyanate_lyase"/>
    <property type="match status" value="1"/>
</dbReference>
<dbReference type="SUPFAM" id="SSF55234">
    <property type="entry name" value="Cyanase C-terminal domain"/>
    <property type="match status" value="1"/>
</dbReference>
<dbReference type="SUPFAM" id="SSF47413">
    <property type="entry name" value="lambda repressor-like DNA-binding domains"/>
    <property type="match status" value="1"/>
</dbReference>
<organism>
    <name type="scientific">Penicillium rubens (strain ATCC 28089 / DSM 1075 / NRRL 1951 / Wisconsin 54-1255)</name>
    <name type="common">Penicillium chrysogenum</name>
    <dbReference type="NCBI Taxonomy" id="500485"/>
    <lineage>
        <taxon>Eukaryota</taxon>
        <taxon>Fungi</taxon>
        <taxon>Dikarya</taxon>
        <taxon>Ascomycota</taxon>
        <taxon>Pezizomycotina</taxon>
        <taxon>Eurotiomycetes</taxon>
        <taxon>Eurotiomycetidae</taxon>
        <taxon>Eurotiales</taxon>
        <taxon>Aspergillaceae</taxon>
        <taxon>Penicillium</taxon>
        <taxon>Penicillium chrysogenum species complex</taxon>
    </lineage>
</organism>
<proteinExistence type="inferred from homology"/>
<reference key="1">
    <citation type="journal article" date="2008" name="Nat. Biotechnol.">
        <title>Genome sequencing and analysis of the filamentous fungus Penicillium chrysogenum.</title>
        <authorList>
            <person name="van den Berg M.A."/>
            <person name="Albang R."/>
            <person name="Albermann K."/>
            <person name="Badger J.H."/>
            <person name="Daran J.-M."/>
            <person name="Driessen A.J.M."/>
            <person name="Garcia-Estrada C."/>
            <person name="Fedorova N.D."/>
            <person name="Harris D.M."/>
            <person name="Heijne W.H.M."/>
            <person name="Joardar V.S."/>
            <person name="Kiel J.A.K.W."/>
            <person name="Kovalchuk A."/>
            <person name="Martin J.F."/>
            <person name="Nierman W.C."/>
            <person name="Nijland J.G."/>
            <person name="Pronk J.T."/>
            <person name="Roubos J.A."/>
            <person name="van der Klei I.J."/>
            <person name="van Peij N.N.M.E."/>
            <person name="Veenhuis M."/>
            <person name="von Doehren H."/>
            <person name="Wagner C."/>
            <person name="Wortman J.R."/>
            <person name="Bovenberg R.A.L."/>
        </authorList>
    </citation>
    <scope>NUCLEOTIDE SEQUENCE [LARGE SCALE GENOMIC DNA]</scope>
    <source>
        <strain>ATCC 28089 / DSM 1075 / NRRL 1951 / Wisconsin 54-1255</strain>
    </source>
</reference>
<feature type="chain" id="PRO_0000403261" description="Cyanate hydratase">
    <location>
        <begin position="1"/>
        <end position="160"/>
    </location>
</feature>
<feature type="active site" evidence="1">
    <location>
        <position position="100"/>
    </location>
</feature>
<feature type="active site" evidence="1">
    <location>
        <position position="103"/>
    </location>
</feature>
<feature type="active site" evidence="1">
    <location>
        <position position="126"/>
    </location>
</feature>